<gene>
    <name evidence="4" type="primary">claQ</name>
</gene>
<name>CLAQ_AMPCV</name>
<comment type="function">
    <text evidence="3">Cytochrome P450 monooxygenase; part of the gene cluster that mediates the biosynthesis of clavilactone A, a meroterpenoid that features a unique benzo-fused ten-membered carbocyclic ring unit with an alpha,beta-epoxy-gamma-lactone moiety, forming an intriguing 10/5/3 tricyclic nested skeleton (PubMed:38602511). Cytochrome P450 monooxygenases claO, claP, claQ, claU, and claW are close orthologs, suggesting that a redundant function or pseudogenes are present in the cla cluster. These monoxygenases are not involved in clavilactone A biosynthesis nor its modification (PubMed:38602511). ClaR, ClaS and ClaT are sufficient to produce clavilactone A. The biosynthesis begins with the prenyltransferase claS that transfers geranyl pyrophosphate (GPP) to hydroquinone to produces geranylhydroquinone. The cytochrome P450 monooxygenase claR then catalyzes the diradical coupling reaction between the intramolecular hydroquinone and allyl moieties to form the benzo-fused ten-membered carbocyclic ring unit of wigantol. Finally the cytochrome P450 monooxygenase claT exquisitely and stereoselectively assembles the alpha,beta-epoxy-gamma-lactone moiety, producing clavilactone A via arnebinol A (PubMed:38602511).</text>
</comment>
<comment type="cofactor">
    <cofactor evidence="1">
        <name>heme</name>
        <dbReference type="ChEBI" id="CHEBI:30413"/>
    </cofactor>
</comment>
<comment type="pathway">
    <text evidence="6">Secondary metabolite biosynthesis; terpenoid biosynthesis.</text>
</comment>
<comment type="subcellular location">
    <subcellularLocation>
        <location evidence="2">Membrane</location>
        <topology evidence="2">Multi-pass membrane protein</topology>
    </subcellularLocation>
</comment>
<comment type="similarity">
    <text evidence="5">Belongs to the cytochrome P450 family.</text>
</comment>
<evidence type="ECO:0000250" key="1">
    <source>
        <dbReference type="UniProtKB" id="P04798"/>
    </source>
</evidence>
<evidence type="ECO:0000255" key="2"/>
<evidence type="ECO:0000269" key="3">
    <source>
    </source>
</evidence>
<evidence type="ECO:0000303" key="4">
    <source>
    </source>
</evidence>
<evidence type="ECO:0000305" key="5"/>
<evidence type="ECO:0000305" key="6">
    <source>
    </source>
</evidence>
<protein>
    <recommendedName>
        <fullName evidence="4">Cytochrome P450 monooxygenase claQ</fullName>
        <ecNumber evidence="6">1.-.-.-</ecNumber>
    </recommendedName>
    <alternativeName>
        <fullName evidence="4">Clavilactone A biosynthesis cluster protein Q</fullName>
    </alternativeName>
</protein>
<proteinExistence type="inferred from homology"/>
<organism>
    <name type="scientific">Ampulloclitocybe clavipes</name>
    <name type="common">Club foot</name>
    <name type="synonym">Clitocybe clavipes</name>
    <dbReference type="NCBI Taxonomy" id="56467"/>
    <lineage>
        <taxon>Eukaryota</taxon>
        <taxon>Fungi</taxon>
        <taxon>Dikarya</taxon>
        <taxon>Basidiomycota</taxon>
        <taxon>Agaricomycotina</taxon>
        <taxon>Agaricomycetes</taxon>
        <taxon>Agaricomycetidae</taxon>
        <taxon>Agaricales</taxon>
        <taxon>Hygrophoraceae</taxon>
        <taxon>Ampulloclitocybe</taxon>
    </lineage>
</organism>
<feature type="chain" id="PRO_0000461437" description="Cytochrome P450 monooxygenase claQ">
    <location>
        <begin position="1"/>
        <end position="535"/>
    </location>
</feature>
<feature type="transmembrane region" description="Helical" evidence="2">
    <location>
        <begin position="7"/>
        <end position="27"/>
    </location>
</feature>
<feature type="transmembrane region" description="Helical" evidence="2">
    <location>
        <begin position="225"/>
        <end position="245"/>
    </location>
</feature>
<feature type="binding site" description="axial binding residue" evidence="1">
    <location>
        <position position="472"/>
    </location>
    <ligand>
        <name>heme</name>
        <dbReference type="ChEBI" id="CHEBI:30413"/>
    </ligand>
    <ligandPart>
        <name>Fe</name>
        <dbReference type="ChEBI" id="CHEBI:18248"/>
    </ligandPart>
</feature>
<keyword id="KW-0349">Heme</keyword>
<keyword id="KW-0408">Iron</keyword>
<keyword id="KW-0472">Membrane</keyword>
<keyword id="KW-0479">Metal-binding</keyword>
<keyword id="KW-0503">Monooxygenase</keyword>
<keyword id="KW-0560">Oxidoreductase</keyword>
<keyword id="KW-0812">Transmembrane</keyword>
<keyword id="KW-1133">Transmembrane helix</keyword>
<dbReference type="EC" id="1.-.-.-" evidence="6"/>
<dbReference type="EMBL" id="PP505398">
    <property type="protein sequence ID" value="WYC13318.1"/>
    <property type="molecule type" value="Genomic_DNA"/>
</dbReference>
<dbReference type="SMR" id="P9WEI8"/>
<dbReference type="UniPathway" id="UPA00213"/>
<dbReference type="GO" id="GO:0016020">
    <property type="term" value="C:membrane"/>
    <property type="evidence" value="ECO:0007669"/>
    <property type="project" value="UniProtKB-SubCell"/>
</dbReference>
<dbReference type="GO" id="GO:0020037">
    <property type="term" value="F:heme binding"/>
    <property type="evidence" value="ECO:0007669"/>
    <property type="project" value="InterPro"/>
</dbReference>
<dbReference type="GO" id="GO:0005506">
    <property type="term" value="F:iron ion binding"/>
    <property type="evidence" value="ECO:0007669"/>
    <property type="project" value="InterPro"/>
</dbReference>
<dbReference type="GO" id="GO:0004497">
    <property type="term" value="F:monooxygenase activity"/>
    <property type="evidence" value="ECO:0007669"/>
    <property type="project" value="UniProtKB-KW"/>
</dbReference>
<dbReference type="GO" id="GO:0016705">
    <property type="term" value="F:oxidoreductase activity, acting on paired donors, with incorporation or reduction of molecular oxygen"/>
    <property type="evidence" value="ECO:0007669"/>
    <property type="project" value="InterPro"/>
</dbReference>
<dbReference type="CDD" id="cd11069">
    <property type="entry name" value="CYP_FUM15-like"/>
    <property type="match status" value="1"/>
</dbReference>
<dbReference type="Gene3D" id="1.10.630.10">
    <property type="entry name" value="Cytochrome P450"/>
    <property type="match status" value="1"/>
</dbReference>
<dbReference type="InterPro" id="IPR001128">
    <property type="entry name" value="Cyt_P450"/>
</dbReference>
<dbReference type="InterPro" id="IPR002401">
    <property type="entry name" value="Cyt_P450_E_grp-I"/>
</dbReference>
<dbReference type="InterPro" id="IPR036396">
    <property type="entry name" value="Cyt_P450_sf"/>
</dbReference>
<dbReference type="InterPro" id="IPR050121">
    <property type="entry name" value="Cytochrome_P450_monoxygenase"/>
</dbReference>
<dbReference type="PANTHER" id="PTHR24305">
    <property type="entry name" value="CYTOCHROME P450"/>
    <property type="match status" value="1"/>
</dbReference>
<dbReference type="PANTHER" id="PTHR24305:SF166">
    <property type="entry name" value="CYTOCHROME P450 12A4, MITOCHONDRIAL-RELATED"/>
    <property type="match status" value="1"/>
</dbReference>
<dbReference type="Pfam" id="PF00067">
    <property type="entry name" value="p450"/>
    <property type="match status" value="1"/>
</dbReference>
<dbReference type="PRINTS" id="PR00463">
    <property type="entry name" value="EP450I"/>
</dbReference>
<dbReference type="PRINTS" id="PR00385">
    <property type="entry name" value="P450"/>
</dbReference>
<dbReference type="SUPFAM" id="SSF48264">
    <property type="entry name" value="Cytochrome P450"/>
    <property type="match status" value="1"/>
</dbReference>
<sequence>MTPVREIGTWDVLFFLVFLWLLSKLVGRLGRRGRTTPLRGPANKSLFFGLTRYLNESDDPGAIYESWAAEYGPAFRVPSVLGSHRIMICDAKAIAHFYSKETFGYVQTPMTRISIKNIVGRGLLWSEGESHKRQRKALSPAFSNAAIRRLTSVFFDSSYKMKAAWDSILETNPDNSVIDVQKWMNHISLDSIGIAGFSHDFGSLDGKHSDVAAVFDSFGSTKPSYFAIVVFLLAQIFPILLNLPTNRILLINKLKKTMGDIADELLERTRKEKEGETGAVEEKSIIGLLIKAESAEAELRMSQDEVLAQMNVLILAGYETTSISLTWALIELSKRPEKQAKLREELLSQFTSTDPTWEQLTNGLPYLDSVVHEVLRLHPPIGELFRMAAEDDMMPLSTPLVTLSGQTVSSIAIGKGTVVGVPIRCMNRSEVLWGKDAKEFRPERWLEPGFGENNEVQGHRHLLTFVDGPRMCLGKGFALTEFKAALSVLIRNYTFEFPGPGGAVPKIEKHRSILPRPKVEGQDGAKVPLRVRRVE</sequence>
<reference key="1">
    <citation type="journal article" date="2024" name="J. Am. Chem. Soc.">
        <title>Two cytochrome P450 enzymes form the tricyclic nested skeleton of meroterpenoids by sequential oxidative reactions.</title>
        <authorList>
            <person name="Yang E."/>
            <person name="Yao Y."/>
            <person name="Su H."/>
            <person name="Sun Z."/>
            <person name="Gao S.S."/>
            <person name="Sureram S."/>
            <person name="Kittakoop P."/>
            <person name="Fan K."/>
            <person name="Pan Y."/>
            <person name="Xu X."/>
            <person name="Sun Z.H."/>
            <person name="Ma G."/>
            <person name="Liu G."/>
        </authorList>
    </citation>
    <scope>NUCLEOTIDE SEQUENCE [GENOMIC DNA]</scope>
    <scope>FUNCTION</scope>
    <scope>PATHWAY</scope>
</reference>
<accession>P9WEI8</accession>